<gene>
    <name evidence="1" type="primary">def</name>
    <name type="ordered locus">A9601_00801</name>
</gene>
<accession>A2BNK7</accession>
<name>DEF_PROMS</name>
<comment type="function">
    <text evidence="1">Removes the formyl group from the N-terminal Met of newly synthesized proteins. Requires at least a dipeptide for an efficient rate of reaction. N-terminal L-methionine is a prerequisite for activity but the enzyme has broad specificity at other positions.</text>
</comment>
<comment type="catalytic activity">
    <reaction evidence="1">
        <text>N-terminal N-formyl-L-methionyl-[peptide] + H2O = N-terminal L-methionyl-[peptide] + formate</text>
        <dbReference type="Rhea" id="RHEA:24420"/>
        <dbReference type="Rhea" id="RHEA-COMP:10639"/>
        <dbReference type="Rhea" id="RHEA-COMP:10640"/>
        <dbReference type="ChEBI" id="CHEBI:15377"/>
        <dbReference type="ChEBI" id="CHEBI:15740"/>
        <dbReference type="ChEBI" id="CHEBI:49298"/>
        <dbReference type="ChEBI" id="CHEBI:64731"/>
        <dbReference type="EC" id="3.5.1.88"/>
    </reaction>
</comment>
<comment type="cofactor">
    <cofactor evidence="1">
        <name>Fe(2+)</name>
        <dbReference type="ChEBI" id="CHEBI:29033"/>
    </cofactor>
    <text evidence="1">Binds 1 Fe(2+) ion.</text>
</comment>
<comment type="similarity">
    <text evidence="1">Belongs to the polypeptide deformylase family.</text>
</comment>
<reference key="1">
    <citation type="journal article" date="2007" name="PLoS Genet.">
        <title>Patterns and implications of gene gain and loss in the evolution of Prochlorococcus.</title>
        <authorList>
            <person name="Kettler G.C."/>
            <person name="Martiny A.C."/>
            <person name="Huang K."/>
            <person name="Zucker J."/>
            <person name="Coleman M.L."/>
            <person name="Rodrigue S."/>
            <person name="Chen F."/>
            <person name="Lapidus A."/>
            <person name="Ferriera S."/>
            <person name="Johnson J."/>
            <person name="Steglich C."/>
            <person name="Church G.M."/>
            <person name="Richardson P."/>
            <person name="Chisholm S.W."/>
        </authorList>
    </citation>
    <scope>NUCLEOTIDE SEQUENCE [LARGE SCALE GENOMIC DNA]</scope>
    <source>
        <strain>AS9601</strain>
    </source>
</reference>
<evidence type="ECO:0000255" key="1">
    <source>
        <dbReference type="HAMAP-Rule" id="MF_00163"/>
    </source>
</evidence>
<evidence type="ECO:0000256" key="2">
    <source>
        <dbReference type="SAM" id="MobiDB-lite"/>
    </source>
</evidence>
<organism>
    <name type="scientific">Prochlorococcus marinus (strain AS9601)</name>
    <dbReference type="NCBI Taxonomy" id="146891"/>
    <lineage>
        <taxon>Bacteria</taxon>
        <taxon>Bacillati</taxon>
        <taxon>Cyanobacteriota</taxon>
        <taxon>Cyanophyceae</taxon>
        <taxon>Synechococcales</taxon>
        <taxon>Prochlorococcaceae</taxon>
        <taxon>Prochlorococcus</taxon>
    </lineage>
</organism>
<feature type="chain" id="PRO_0000301077" description="Peptide deformylase">
    <location>
        <begin position="1"/>
        <end position="201"/>
    </location>
</feature>
<feature type="region of interest" description="Disordered" evidence="2">
    <location>
        <begin position="1"/>
        <end position="21"/>
    </location>
</feature>
<feature type="active site" evidence="1">
    <location>
        <position position="164"/>
    </location>
</feature>
<feature type="binding site" evidence="1">
    <location>
        <position position="121"/>
    </location>
    <ligand>
        <name>Fe cation</name>
        <dbReference type="ChEBI" id="CHEBI:24875"/>
    </ligand>
</feature>
<feature type="binding site" evidence="1">
    <location>
        <position position="163"/>
    </location>
    <ligand>
        <name>Fe cation</name>
        <dbReference type="ChEBI" id="CHEBI:24875"/>
    </ligand>
</feature>
<feature type="binding site" evidence="1">
    <location>
        <position position="167"/>
    </location>
    <ligand>
        <name>Fe cation</name>
        <dbReference type="ChEBI" id="CHEBI:24875"/>
    </ligand>
</feature>
<sequence length="201" mass="22562">MANHFSQLAKKSRTNGNAEKIAKEQSGKPFLDIYKLGDDVLRQNSKRITKVDESIRKLAREMLQSMYAAKGIGLAAPQIGINKELLVIDVNFEDSAAEPLILINPEITDFGTTLNSYEEGCLSIPGVYLNVVRPSTIKLKFRDEMGRPRKMKADGLLARCIQHEMDHLNGILFVDRVTSKDDLNKELLKEGFNEKDVISIN</sequence>
<dbReference type="EC" id="3.5.1.88" evidence="1"/>
<dbReference type="EMBL" id="CP000551">
    <property type="protein sequence ID" value="ABM69368.1"/>
    <property type="molecule type" value="Genomic_DNA"/>
</dbReference>
<dbReference type="RefSeq" id="WP_011817558.1">
    <property type="nucleotide sequence ID" value="NC_008816.1"/>
</dbReference>
<dbReference type="SMR" id="A2BNK7"/>
<dbReference type="STRING" id="146891.A9601_00801"/>
<dbReference type="KEGG" id="pmb:A9601_00801"/>
<dbReference type="eggNOG" id="COG0242">
    <property type="taxonomic scope" value="Bacteria"/>
</dbReference>
<dbReference type="HOGENOM" id="CLU_061901_4_2_3"/>
<dbReference type="OrthoDB" id="9784988at2"/>
<dbReference type="Proteomes" id="UP000002590">
    <property type="component" value="Chromosome"/>
</dbReference>
<dbReference type="GO" id="GO:0046872">
    <property type="term" value="F:metal ion binding"/>
    <property type="evidence" value="ECO:0007669"/>
    <property type="project" value="UniProtKB-KW"/>
</dbReference>
<dbReference type="GO" id="GO:0042586">
    <property type="term" value="F:peptide deformylase activity"/>
    <property type="evidence" value="ECO:0007669"/>
    <property type="project" value="UniProtKB-UniRule"/>
</dbReference>
<dbReference type="GO" id="GO:0043686">
    <property type="term" value="P:co-translational protein modification"/>
    <property type="evidence" value="ECO:0007669"/>
    <property type="project" value="TreeGrafter"/>
</dbReference>
<dbReference type="GO" id="GO:0006412">
    <property type="term" value="P:translation"/>
    <property type="evidence" value="ECO:0007669"/>
    <property type="project" value="UniProtKB-UniRule"/>
</dbReference>
<dbReference type="CDD" id="cd00487">
    <property type="entry name" value="Pep_deformylase"/>
    <property type="match status" value="1"/>
</dbReference>
<dbReference type="FunFam" id="3.90.45.10:FF:000005">
    <property type="entry name" value="Peptide deformylase"/>
    <property type="match status" value="1"/>
</dbReference>
<dbReference type="Gene3D" id="3.90.45.10">
    <property type="entry name" value="Peptide deformylase"/>
    <property type="match status" value="1"/>
</dbReference>
<dbReference type="HAMAP" id="MF_00163">
    <property type="entry name" value="Pep_deformylase"/>
    <property type="match status" value="1"/>
</dbReference>
<dbReference type="InterPro" id="IPR023635">
    <property type="entry name" value="Peptide_deformylase"/>
</dbReference>
<dbReference type="InterPro" id="IPR036821">
    <property type="entry name" value="Peptide_deformylase_sf"/>
</dbReference>
<dbReference type="NCBIfam" id="TIGR00079">
    <property type="entry name" value="pept_deformyl"/>
    <property type="match status" value="1"/>
</dbReference>
<dbReference type="NCBIfam" id="NF001159">
    <property type="entry name" value="PRK00150.1-3"/>
    <property type="match status" value="1"/>
</dbReference>
<dbReference type="PANTHER" id="PTHR10458">
    <property type="entry name" value="PEPTIDE DEFORMYLASE"/>
    <property type="match status" value="1"/>
</dbReference>
<dbReference type="PANTHER" id="PTHR10458:SF22">
    <property type="entry name" value="PEPTIDE DEFORMYLASE"/>
    <property type="match status" value="1"/>
</dbReference>
<dbReference type="Pfam" id="PF01327">
    <property type="entry name" value="Pep_deformylase"/>
    <property type="match status" value="1"/>
</dbReference>
<dbReference type="PIRSF" id="PIRSF004749">
    <property type="entry name" value="Pep_def"/>
    <property type="match status" value="1"/>
</dbReference>
<dbReference type="PRINTS" id="PR01576">
    <property type="entry name" value="PDEFORMYLASE"/>
</dbReference>
<dbReference type="SUPFAM" id="SSF56420">
    <property type="entry name" value="Peptide deformylase"/>
    <property type="match status" value="1"/>
</dbReference>
<protein>
    <recommendedName>
        <fullName evidence="1">Peptide deformylase</fullName>
        <shortName evidence="1">PDF</shortName>
        <ecNumber evidence="1">3.5.1.88</ecNumber>
    </recommendedName>
    <alternativeName>
        <fullName evidence="1">Polypeptide deformylase</fullName>
    </alternativeName>
</protein>
<keyword id="KW-0378">Hydrolase</keyword>
<keyword id="KW-0408">Iron</keyword>
<keyword id="KW-0479">Metal-binding</keyword>
<keyword id="KW-0648">Protein biosynthesis</keyword>
<proteinExistence type="inferred from homology"/>